<accession>B5FCI8</accession>
<dbReference type="EMBL" id="CP001139">
    <property type="protein sequence ID" value="ACH67217.1"/>
    <property type="molecule type" value="Genomic_DNA"/>
</dbReference>
<dbReference type="RefSeq" id="WP_005418453.1">
    <property type="nucleotide sequence ID" value="NC_011184.1"/>
</dbReference>
<dbReference type="SMR" id="B5FCI8"/>
<dbReference type="GeneID" id="54163557"/>
<dbReference type="KEGG" id="vfm:VFMJ11_0927"/>
<dbReference type="HOGENOM" id="CLU_035023_2_2_6"/>
<dbReference type="Proteomes" id="UP000001857">
    <property type="component" value="Chromosome I"/>
</dbReference>
<dbReference type="GO" id="GO:0005886">
    <property type="term" value="C:plasma membrane"/>
    <property type="evidence" value="ECO:0007669"/>
    <property type="project" value="UniProtKB-SubCell"/>
</dbReference>
<dbReference type="GO" id="GO:0008324">
    <property type="term" value="F:monoatomic cation transmembrane transporter activity"/>
    <property type="evidence" value="ECO:0007669"/>
    <property type="project" value="InterPro"/>
</dbReference>
<dbReference type="GO" id="GO:0006813">
    <property type="term" value="P:potassium ion transport"/>
    <property type="evidence" value="ECO:0007669"/>
    <property type="project" value="InterPro"/>
</dbReference>
<dbReference type="Gene3D" id="3.30.70.1450">
    <property type="entry name" value="Regulator of K+ conductance, C-terminal domain"/>
    <property type="match status" value="2"/>
</dbReference>
<dbReference type="HAMAP" id="MF_01015">
    <property type="entry name" value="YbjL"/>
    <property type="match status" value="1"/>
</dbReference>
<dbReference type="InterPro" id="IPR050144">
    <property type="entry name" value="AAE_transporter"/>
</dbReference>
<dbReference type="InterPro" id="IPR006037">
    <property type="entry name" value="RCK_C"/>
</dbReference>
<dbReference type="InterPro" id="IPR036721">
    <property type="entry name" value="RCK_C_sf"/>
</dbReference>
<dbReference type="InterPro" id="IPR023017">
    <property type="entry name" value="Transp_YbjL_put"/>
</dbReference>
<dbReference type="InterPro" id="IPR006512">
    <property type="entry name" value="YidE_YbjL"/>
</dbReference>
<dbReference type="NCBIfam" id="NF003440">
    <property type="entry name" value="PRK04972.1"/>
    <property type="match status" value="1"/>
</dbReference>
<dbReference type="NCBIfam" id="TIGR01625">
    <property type="entry name" value="YidE_YbjL_dupl"/>
    <property type="match status" value="2"/>
</dbReference>
<dbReference type="PANTHER" id="PTHR30445">
    <property type="entry name" value="K(+)_H(+) ANTIPORTER SUBUNIT KHTT"/>
    <property type="match status" value="1"/>
</dbReference>
<dbReference type="PANTHER" id="PTHR30445:SF10">
    <property type="entry name" value="TRANSPORT PROTEIN YBJL-RELATED"/>
    <property type="match status" value="1"/>
</dbReference>
<dbReference type="Pfam" id="PF06826">
    <property type="entry name" value="Asp-Al_Ex"/>
    <property type="match status" value="2"/>
</dbReference>
<dbReference type="Pfam" id="PF02080">
    <property type="entry name" value="TrkA_C"/>
    <property type="match status" value="2"/>
</dbReference>
<dbReference type="SUPFAM" id="SSF116726">
    <property type="entry name" value="TrkA C-terminal domain-like"/>
    <property type="match status" value="2"/>
</dbReference>
<dbReference type="PROSITE" id="PS51202">
    <property type="entry name" value="RCK_C"/>
    <property type="match status" value="2"/>
</dbReference>
<organism>
    <name type="scientific">Aliivibrio fischeri (strain MJ11)</name>
    <name type="common">Vibrio fischeri</name>
    <dbReference type="NCBI Taxonomy" id="388396"/>
    <lineage>
        <taxon>Bacteria</taxon>
        <taxon>Pseudomonadati</taxon>
        <taxon>Pseudomonadota</taxon>
        <taxon>Gammaproteobacteria</taxon>
        <taxon>Vibrionales</taxon>
        <taxon>Vibrionaceae</taxon>
        <taxon>Aliivibrio</taxon>
    </lineage>
</organism>
<comment type="subcellular location">
    <subcellularLocation>
        <location evidence="1">Cell membrane</location>
        <topology evidence="1">Multi-pass membrane protein</topology>
    </subcellularLocation>
</comment>
<comment type="similarity">
    <text evidence="1">Belongs to the AAE transporter (TC 2.A.81) family. YbjL subfamily.</text>
</comment>
<feature type="chain" id="PRO_1000135198" description="Putative transport protein VFMJ11_0927">
    <location>
        <begin position="1"/>
        <end position="560"/>
    </location>
</feature>
<feature type="transmembrane region" description="Helical" evidence="1">
    <location>
        <begin position="8"/>
        <end position="28"/>
    </location>
</feature>
<feature type="transmembrane region" description="Helical" evidence="1">
    <location>
        <begin position="37"/>
        <end position="57"/>
    </location>
</feature>
<feature type="transmembrane region" description="Helical" evidence="1">
    <location>
        <begin position="66"/>
        <end position="86"/>
    </location>
</feature>
<feature type="transmembrane region" description="Helical" evidence="1">
    <location>
        <begin position="94"/>
        <end position="114"/>
    </location>
</feature>
<feature type="transmembrane region" description="Helical" evidence="1">
    <location>
        <begin position="161"/>
        <end position="181"/>
    </location>
</feature>
<feature type="transmembrane region" description="Helical" evidence="1">
    <location>
        <begin position="386"/>
        <end position="406"/>
    </location>
</feature>
<feature type="transmembrane region" description="Helical" evidence="1">
    <location>
        <begin position="409"/>
        <end position="429"/>
    </location>
</feature>
<feature type="transmembrane region" description="Helical" evidence="1">
    <location>
        <begin position="451"/>
        <end position="471"/>
    </location>
</feature>
<feature type="transmembrane region" description="Helical" evidence="1">
    <location>
        <begin position="478"/>
        <end position="498"/>
    </location>
</feature>
<feature type="transmembrane region" description="Helical" evidence="1">
    <location>
        <begin position="539"/>
        <end position="559"/>
    </location>
</feature>
<feature type="domain" description="RCK C-terminal 1" evidence="1">
    <location>
        <begin position="203"/>
        <end position="292"/>
    </location>
</feature>
<feature type="domain" description="RCK C-terminal 2" evidence="1">
    <location>
        <begin position="293"/>
        <end position="376"/>
    </location>
</feature>
<keyword id="KW-1003">Cell membrane</keyword>
<keyword id="KW-0472">Membrane</keyword>
<keyword id="KW-0677">Repeat</keyword>
<keyword id="KW-0812">Transmembrane</keyword>
<keyword id="KW-1133">Transmembrane helix</keyword>
<keyword id="KW-0813">Transport</keyword>
<reference key="1">
    <citation type="submission" date="2008-08" db="EMBL/GenBank/DDBJ databases">
        <title>Complete sequence of Vibrio fischeri strain MJ11.</title>
        <authorList>
            <person name="Mandel M.J."/>
            <person name="Stabb E.V."/>
            <person name="Ruby E.G."/>
            <person name="Ferriera S."/>
            <person name="Johnson J."/>
            <person name="Kravitz S."/>
            <person name="Beeson K."/>
            <person name="Sutton G."/>
            <person name="Rogers Y.-H."/>
            <person name="Friedman R."/>
            <person name="Frazier M."/>
            <person name="Venter J.C."/>
        </authorList>
    </citation>
    <scope>NUCLEOTIDE SEQUENCE [LARGE SCALE GENOMIC DNA]</scope>
    <source>
        <strain>MJ11</strain>
    </source>
</reference>
<sequence>MNIDVATLLSQNDILLLFVVLALGLFIAKLRIGSFQLGSSIGVLITALFMGSLGYTFTADSLNIGFMLFIFCVGIEAGPNFFGIFLRDGKHYLLLVLVVLVSAVSLSFLTGHYFGLDYGLSTGMMAGALTATPVLVGAKDALNSGLAALPEGVDFSKVIDNLSVGYAFSYLIGLTSLILLARLLPKLQKQNLQDSAMQIAQERGIGSAGQRKVYLPIIRAYRVGQELIDWTDGKNLRELGIHRQTGCHIERIRRNGILANPDGDYILQQGDEIALVGYPDSHARLDSSFRNGKEVFDRNLLDLRIAEEEIVVKSDNIAGKRLSELNLSEYGCFLNRVVRAQIEMPIEHDIVLAKGDILQVSGEKSKVHYLADKIGFISIHSQVSDLLAFCSFFILGIMFGMITMSFGQVTFGLGNAVGLLISGITLGFLRANHPTFGYVPQGALNMTKNLGLLVFMVGIGLSAGGNINEYFSEDGLKVLAAAFIVSVIPVILAYLVGAYILNMNRALLIGAIIGARTCGPAMDVVNEHARSTIPALGYAGTYAIANILMTVAGTIMILLA</sequence>
<name>Y927_ALIFM</name>
<gene>
    <name type="ordered locus">VFMJ11_0927</name>
</gene>
<evidence type="ECO:0000255" key="1">
    <source>
        <dbReference type="HAMAP-Rule" id="MF_01015"/>
    </source>
</evidence>
<proteinExistence type="inferred from homology"/>
<protein>
    <recommendedName>
        <fullName evidence="1">Putative transport protein VFMJ11_0927</fullName>
    </recommendedName>
</protein>